<organism>
    <name type="scientific">Serratia proteamaculans (strain 568)</name>
    <dbReference type="NCBI Taxonomy" id="399741"/>
    <lineage>
        <taxon>Bacteria</taxon>
        <taxon>Pseudomonadati</taxon>
        <taxon>Pseudomonadota</taxon>
        <taxon>Gammaproteobacteria</taxon>
        <taxon>Enterobacterales</taxon>
        <taxon>Yersiniaceae</taxon>
        <taxon>Serratia</taxon>
    </lineage>
</organism>
<name>IDI_SERP5</name>
<keyword id="KW-0963">Cytoplasm</keyword>
<keyword id="KW-0413">Isomerase</keyword>
<keyword id="KW-0414">Isoprene biosynthesis</keyword>
<keyword id="KW-0460">Magnesium</keyword>
<keyword id="KW-0464">Manganese</keyword>
<keyword id="KW-0479">Metal-binding</keyword>
<accession>A8GDW2</accession>
<evidence type="ECO:0000255" key="1">
    <source>
        <dbReference type="HAMAP-Rule" id="MF_00202"/>
    </source>
</evidence>
<gene>
    <name evidence="1" type="primary">idi</name>
    <name type="ordered locus">Spro_2201</name>
</gene>
<protein>
    <recommendedName>
        <fullName evidence="1">Isopentenyl-diphosphate Delta-isomerase</fullName>
        <shortName evidence="1">IPP isomerase</shortName>
        <ecNumber evidence="1">5.3.3.2</ecNumber>
    </recommendedName>
    <alternativeName>
        <fullName evidence="1">IPP:DMAPP isomerase</fullName>
    </alternativeName>
    <alternativeName>
        <fullName evidence="1">Isopentenyl pyrophosphate isomerase</fullName>
    </alternativeName>
</protein>
<dbReference type="EC" id="5.3.3.2" evidence="1"/>
<dbReference type="EMBL" id="CP000826">
    <property type="protein sequence ID" value="ABV41302.1"/>
    <property type="molecule type" value="Genomic_DNA"/>
</dbReference>
<dbReference type="SMR" id="A8GDW2"/>
<dbReference type="STRING" id="399741.Spro_2201"/>
<dbReference type="KEGG" id="spe:Spro_2201"/>
<dbReference type="eggNOG" id="COG1443">
    <property type="taxonomic scope" value="Bacteria"/>
</dbReference>
<dbReference type="HOGENOM" id="CLU_060552_2_1_6"/>
<dbReference type="OrthoDB" id="9809458at2"/>
<dbReference type="UniPathway" id="UPA00059">
    <property type="reaction ID" value="UER00104"/>
</dbReference>
<dbReference type="GO" id="GO:0005737">
    <property type="term" value="C:cytoplasm"/>
    <property type="evidence" value="ECO:0007669"/>
    <property type="project" value="UniProtKB-SubCell"/>
</dbReference>
<dbReference type="GO" id="GO:0004452">
    <property type="term" value="F:isopentenyl-diphosphate delta-isomerase activity"/>
    <property type="evidence" value="ECO:0007669"/>
    <property type="project" value="UniProtKB-UniRule"/>
</dbReference>
<dbReference type="GO" id="GO:0046872">
    <property type="term" value="F:metal ion binding"/>
    <property type="evidence" value="ECO:0007669"/>
    <property type="project" value="UniProtKB-KW"/>
</dbReference>
<dbReference type="GO" id="GO:0050992">
    <property type="term" value="P:dimethylallyl diphosphate biosynthetic process"/>
    <property type="evidence" value="ECO:0007669"/>
    <property type="project" value="UniProtKB-UniRule"/>
</dbReference>
<dbReference type="GO" id="GO:0009240">
    <property type="term" value="P:isopentenyl diphosphate biosynthetic process"/>
    <property type="evidence" value="ECO:0007669"/>
    <property type="project" value="TreeGrafter"/>
</dbReference>
<dbReference type="CDD" id="cd02885">
    <property type="entry name" value="NUDIX_IPP_Isomerase"/>
    <property type="match status" value="1"/>
</dbReference>
<dbReference type="Gene3D" id="3.90.79.10">
    <property type="entry name" value="Nucleoside Triphosphate Pyrophosphohydrolase"/>
    <property type="match status" value="1"/>
</dbReference>
<dbReference type="HAMAP" id="MF_00202">
    <property type="entry name" value="Idi"/>
    <property type="match status" value="1"/>
</dbReference>
<dbReference type="InterPro" id="IPR056375">
    <property type="entry name" value="Idi_bact"/>
</dbReference>
<dbReference type="InterPro" id="IPR011876">
    <property type="entry name" value="IsopentenylPP_isomerase_typ1"/>
</dbReference>
<dbReference type="InterPro" id="IPR015797">
    <property type="entry name" value="NUDIX_hydrolase-like_dom_sf"/>
</dbReference>
<dbReference type="InterPro" id="IPR000086">
    <property type="entry name" value="NUDIX_hydrolase_dom"/>
</dbReference>
<dbReference type="NCBIfam" id="TIGR02150">
    <property type="entry name" value="IPP_isom_1"/>
    <property type="match status" value="1"/>
</dbReference>
<dbReference type="NCBIfam" id="NF002995">
    <property type="entry name" value="PRK03759.1"/>
    <property type="match status" value="1"/>
</dbReference>
<dbReference type="PANTHER" id="PTHR10885">
    <property type="entry name" value="ISOPENTENYL-DIPHOSPHATE DELTA-ISOMERASE"/>
    <property type="match status" value="1"/>
</dbReference>
<dbReference type="PANTHER" id="PTHR10885:SF0">
    <property type="entry name" value="ISOPENTENYL-DIPHOSPHATE DELTA-ISOMERASE"/>
    <property type="match status" value="1"/>
</dbReference>
<dbReference type="Pfam" id="PF00293">
    <property type="entry name" value="NUDIX"/>
    <property type="match status" value="1"/>
</dbReference>
<dbReference type="PIRSF" id="PIRSF018427">
    <property type="entry name" value="Isopntndiph_ism"/>
    <property type="match status" value="1"/>
</dbReference>
<dbReference type="SUPFAM" id="SSF55811">
    <property type="entry name" value="Nudix"/>
    <property type="match status" value="1"/>
</dbReference>
<dbReference type="PROSITE" id="PS51462">
    <property type="entry name" value="NUDIX"/>
    <property type="match status" value="1"/>
</dbReference>
<feature type="chain" id="PRO_0000325220" description="Isopentenyl-diphosphate Delta-isomerase">
    <location>
        <begin position="1"/>
        <end position="179"/>
    </location>
</feature>
<feature type="domain" description="Nudix hydrolase">
    <location>
        <begin position="28"/>
        <end position="160"/>
    </location>
</feature>
<feature type="active site" evidence="1">
    <location>
        <position position="65"/>
    </location>
</feature>
<feature type="active site" evidence="1">
    <location>
        <position position="112"/>
    </location>
</feature>
<feature type="binding site" evidence="1">
    <location>
        <position position="24"/>
    </location>
    <ligand>
        <name>Mn(2+)</name>
        <dbReference type="ChEBI" id="CHEBI:29035"/>
    </ligand>
</feature>
<feature type="binding site" evidence="1">
    <location>
        <position position="30"/>
    </location>
    <ligand>
        <name>Mn(2+)</name>
        <dbReference type="ChEBI" id="CHEBI:29035"/>
    </ligand>
</feature>
<feature type="binding site" evidence="1">
    <location>
        <position position="67"/>
    </location>
    <ligand>
        <name>Mn(2+)</name>
        <dbReference type="ChEBI" id="CHEBI:29035"/>
    </ligand>
</feature>
<feature type="binding site" evidence="1">
    <location>
        <position position="85"/>
    </location>
    <ligand>
        <name>Mg(2+)</name>
        <dbReference type="ChEBI" id="CHEBI:18420"/>
    </ligand>
</feature>
<feature type="binding site" evidence="1">
    <location>
        <position position="110"/>
    </location>
    <ligand>
        <name>Mn(2+)</name>
        <dbReference type="ChEBI" id="CHEBI:29035"/>
    </ligand>
</feature>
<feature type="binding site" evidence="1">
    <location>
        <position position="112"/>
    </location>
    <ligand>
        <name>Mn(2+)</name>
        <dbReference type="ChEBI" id="CHEBI:29035"/>
    </ligand>
</feature>
<comment type="function">
    <text evidence="1">Catalyzes the 1,3-allylic rearrangement of the homoallylic substrate isopentenyl (IPP) to its highly electrophilic allylic isomer, dimethylallyl diphosphate (DMAPP).</text>
</comment>
<comment type="catalytic activity">
    <reaction evidence="1">
        <text>isopentenyl diphosphate = dimethylallyl diphosphate</text>
        <dbReference type="Rhea" id="RHEA:23284"/>
        <dbReference type="ChEBI" id="CHEBI:57623"/>
        <dbReference type="ChEBI" id="CHEBI:128769"/>
        <dbReference type="EC" id="5.3.3.2"/>
    </reaction>
</comment>
<comment type="cofactor">
    <cofactor evidence="1">
        <name>Mg(2+)</name>
        <dbReference type="ChEBI" id="CHEBI:18420"/>
    </cofactor>
    <text evidence="1">Binds 1 Mg(2+) ion per subunit. The magnesium ion binds only when substrate is bound.</text>
</comment>
<comment type="cofactor">
    <cofactor evidence="1">
        <name>Mn(2+)</name>
        <dbReference type="ChEBI" id="CHEBI:29035"/>
    </cofactor>
    <text evidence="1">Binds 1 Mn(2+) ion per subunit.</text>
</comment>
<comment type="pathway">
    <text evidence="1">Isoprenoid biosynthesis; dimethylallyl diphosphate biosynthesis; dimethylallyl diphosphate from isopentenyl diphosphate: step 1/1.</text>
</comment>
<comment type="subunit">
    <text evidence="1">Homodimer.</text>
</comment>
<comment type="subcellular location">
    <subcellularLocation>
        <location evidence="1">Cytoplasm</location>
    </subcellularLocation>
</comment>
<comment type="similarity">
    <text evidence="1">Belongs to the IPP isomerase type 1 family.</text>
</comment>
<reference key="1">
    <citation type="submission" date="2007-09" db="EMBL/GenBank/DDBJ databases">
        <title>Complete sequence of chromosome of Serratia proteamaculans 568.</title>
        <authorList>
            <consortium name="US DOE Joint Genome Institute"/>
            <person name="Copeland A."/>
            <person name="Lucas S."/>
            <person name="Lapidus A."/>
            <person name="Barry K."/>
            <person name="Glavina del Rio T."/>
            <person name="Dalin E."/>
            <person name="Tice H."/>
            <person name="Pitluck S."/>
            <person name="Chain P."/>
            <person name="Malfatti S."/>
            <person name="Shin M."/>
            <person name="Vergez L."/>
            <person name="Schmutz J."/>
            <person name="Larimer F."/>
            <person name="Land M."/>
            <person name="Hauser L."/>
            <person name="Kyrpides N."/>
            <person name="Kim E."/>
            <person name="Taghavi S."/>
            <person name="Newman L."/>
            <person name="Vangronsveld J."/>
            <person name="van der Lelie D."/>
            <person name="Richardson P."/>
        </authorList>
    </citation>
    <scope>NUCLEOTIDE SEQUENCE [LARGE SCALE GENOMIC DNA]</scope>
    <source>
        <strain>568</strain>
    </source>
</reference>
<proteinExistence type="inferred from homology"/>
<sequence>MDEMLILVDADDNAIGSQSKTRVHQQGLLHRAFSIFIFDSQGRLLLQQRAFSKYHSAGLWTNSCCGHPRWGESTLAAAQRRLQEEMGFSAELQQVSSFTYQAAVPGDLIEHEFDHIYVGLFDGKPQGAPEEAHSWSWTDIQQLTDETTRNPEKFTVWFLTIMKDLGANEMERWARLAAS</sequence>